<dbReference type="EMBL" id="X06933">
    <property type="protein sequence ID" value="CAA30019.1"/>
    <property type="molecule type" value="Genomic_DNA"/>
</dbReference>
<dbReference type="PIR" id="S01760">
    <property type="entry name" value="ZHECN4"/>
</dbReference>
<dbReference type="GO" id="GO:0009279">
    <property type="term" value="C:cell outer membrane"/>
    <property type="evidence" value="ECO:0007669"/>
    <property type="project" value="UniProtKB-SubCell"/>
</dbReference>
<dbReference type="GO" id="GO:0019835">
    <property type="term" value="P:cytolysis"/>
    <property type="evidence" value="ECO:0007669"/>
    <property type="project" value="InterPro"/>
</dbReference>
<dbReference type="InterPro" id="IPR003059">
    <property type="entry name" value="Lysis_col"/>
</dbReference>
<dbReference type="Pfam" id="PF02402">
    <property type="entry name" value="Lysis_col"/>
    <property type="match status" value="1"/>
</dbReference>
<dbReference type="PRINTS" id="PR01297">
    <property type="entry name" value="LYSISCOLICIN"/>
</dbReference>
<dbReference type="PROSITE" id="PS51257">
    <property type="entry name" value="PROKAR_LIPOPROTEIN"/>
    <property type="match status" value="1"/>
</dbReference>
<name>LYS4_ECOLX</name>
<reference key="1">
    <citation type="journal article" date="1988" name="Mol. Gen. Genet.">
        <title>The immunity and lysis genes of ColN plasmid pCHAP4.</title>
        <authorList>
            <person name="Pugsley A.P."/>
        </authorList>
    </citation>
    <scope>NUCLEOTIDE SEQUENCE [GENOMIC DNA]</scope>
    <scope>DIACYLGLYCEROL AT CYS-18</scope>
    <scope>PALMITOYLATION AT CYS-18</scope>
</reference>
<geneLocation type="plasmid">
    <name>ColN pCHAP4</name>
</geneLocation>
<sequence length="52" mass="5633">MCGKILLILFFIMTLSACQVNHIRDVKGGTVAPSSSSRLTGLKLSKRSKDPL</sequence>
<feature type="signal peptide">
    <location>
        <begin position="1"/>
        <end position="17"/>
    </location>
</feature>
<feature type="chain" id="PRO_0000005684" description="Lysis protein for colicin N" evidence="1 2">
    <location>
        <begin position="18"/>
        <end position="52"/>
    </location>
</feature>
<feature type="lipid moiety-binding region" description="N-palmitoyl cysteine" evidence="1 2">
    <location>
        <position position="18"/>
    </location>
</feature>
<feature type="lipid moiety-binding region" description="S-diacylglycerol cysteine" evidence="1 2">
    <location>
        <position position="18"/>
    </location>
</feature>
<accession>P09181</accession>
<proteinExistence type="evidence at protein level"/>
<evidence type="ECO:0000255" key="1">
    <source>
        <dbReference type="PROSITE-ProRule" id="PRU00303"/>
    </source>
</evidence>
<evidence type="ECO:0000269" key="2">
    <source>
    </source>
</evidence>
<evidence type="ECO:0000305" key="3"/>
<comment type="function">
    <text>Lysis proteins are required for both colicin release and partial cell lysis.</text>
</comment>
<comment type="subcellular location">
    <subcellularLocation>
        <location evidence="3">Cell outer membrane</location>
        <topology evidence="1">Lipid-anchor</topology>
    </subcellularLocation>
</comment>
<gene>
    <name type="primary">cnl</name>
</gene>
<protein>
    <recommendedName>
        <fullName>Lysis protein for colicin N</fullName>
    </recommendedName>
</protein>
<organism>
    <name type="scientific">Escherichia coli</name>
    <dbReference type="NCBI Taxonomy" id="562"/>
    <lineage>
        <taxon>Bacteria</taxon>
        <taxon>Pseudomonadati</taxon>
        <taxon>Pseudomonadota</taxon>
        <taxon>Gammaproteobacteria</taxon>
        <taxon>Enterobacterales</taxon>
        <taxon>Enterobacteriaceae</taxon>
        <taxon>Escherichia</taxon>
    </lineage>
</organism>
<keyword id="KW-0998">Cell outer membrane</keyword>
<keyword id="KW-0449">Lipoprotein</keyword>
<keyword id="KW-0472">Membrane</keyword>
<keyword id="KW-0564">Palmitate</keyword>
<keyword id="KW-0614">Plasmid</keyword>
<keyword id="KW-0732">Signal</keyword>